<dbReference type="EC" id="4.2.1.9" evidence="1"/>
<dbReference type="EMBL" id="CP000414">
    <property type="protein sequence ID" value="ABJ63110.1"/>
    <property type="molecule type" value="Genomic_DNA"/>
</dbReference>
<dbReference type="RefSeq" id="WP_011680553.1">
    <property type="nucleotide sequence ID" value="NC_008531.1"/>
</dbReference>
<dbReference type="SMR" id="Q03UL2"/>
<dbReference type="EnsemblBacteria" id="ABJ63110">
    <property type="protein sequence ID" value="ABJ63110"/>
    <property type="gene ID" value="LEUM_2040"/>
</dbReference>
<dbReference type="GeneID" id="29576195"/>
<dbReference type="KEGG" id="lme:LEUM_2040"/>
<dbReference type="eggNOG" id="COG0129">
    <property type="taxonomic scope" value="Bacteria"/>
</dbReference>
<dbReference type="HOGENOM" id="CLU_014271_4_2_9"/>
<dbReference type="UniPathway" id="UPA00047">
    <property type="reaction ID" value="UER00057"/>
</dbReference>
<dbReference type="UniPathway" id="UPA00049">
    <property type="reaction ID" value="UER00061"/>
</dbReference>
<dbReference type="Proteomes" id="UP000000362">
    <property type="component" value="Chromosome"/>
</dbReference>
<dbReference type="GO" id="GO:0005829">
    <property type="term" value="C:cytosol"/>
    <property type="evidence" value="ECO:0007669"/>
    <property type="project" value="TreeGrafter"/>
</dbReference>
<dbReference type="GO" id="GO:0051537">
    <property type="term" value="F:2 iron, 2 sulfur cluster binding"/>
    <property type="evidence" value="ECO:0007669"/>
    <property type="project" value="UniProtKB-UniRule"/>
</dbReference>
<dbReference type="GO" id="GO:0004160">
    <property type="term" value="F:dihydroxy-acid dehydratase activity"/>
    <property type="evidence" value="ECO:0007669"/>
    <property type="project" value="UniProtKB-UniRule"/>
</dbReference>
<dbReference type="GO" id="GO:0000287">
    <property type="term" value="F:magnesium ion binding"/>
    <property type="evidence" value="ECO:0007669"/>
    <property type="project" value="UniProtKB-UniRule"/>
</dbReference>
<dbReference type="GO" id="GO:0009097">
    <property type="term" value="P:isoleucine biosynthetic process"/>
    <property type="evidence" value="ECO:0007669"/>
    <property type="project" value="UniProtKB-UniRule"/>
</dbReference>
<dbReference type="GO" id="GO:0009099">
    <property type="term" value="P:L-valine biosynthetic process"/>
    <property type="evidence" value="ECO:0007669"/>
    <property type="project" value="UniProtKB-UniRule"/>
</dbReference>
<dbReference type="FunFam" id="3.50.30.80:FF:000001">
    <property type="entry name" value="Dihydroxy-acid dehydratase"/>
    <property type="match status" value="1"/>
</dbReference>
<dbReference type="Gene3D" id="3.50.30.80">
    <property type="entry name" value="IlvD/EDD C-terminal domain-like"/>
    <property type="match status" value="1"/>
</dbReference>
<dbReference type="HAMAP" id="MF_00012">
    <property type="entry name" value="IlvD"/>
    <property type="match status" value="1"/>
</dbReference>
<dbReference type="InterPro" id="IPR042096">
    <property type="entry name" value="Dihydro-acid_dehy_C"/>
</dbReference>
<dbReference type="InterPro" id="IPR004404">
    <property type="entry name" value="DihydroxyA_deHydtase"/>
</dbReference>
<dbReference type="InterPro" id="IPR020558">
    <property type="entry name" value="DiOHA_6PGluconate_deHydtase_CS"/>
</dbReference>
<dbReference type="InterPro" id="IPR056740">
    <property type="entry name" value="ILV_EDD_C"/>
</dbReference>
<dbReference type="InterPro" id="IPR000581">
    <property type="entry name" value="ILV_EDD_N"/>
</dbReference>
<dbReference type="InterPro" id="IPR037237">
    <property type="entry name" value="IlvD/EDD_N"/>
</dbReference>
<dbReference type="NCBIfam" id="TIGR00110">
    <property type="entry name" value="ilvD"/>
    <property type="match status" value="1"/>
</dbReference>
<dbReference type="NCBIfam" id="NF002068">
    <property type="entry name" value="PRK00911.1"/>
    <property type="match status" value="1"/>
</dbReference>
<dbReference type="PANTHER" id="PTHR43661">
    <property type="entry name" value="D-XYLONATE DEHYDRATASE"/>
    <property type="match status" value="1"/>
</dbReference>
<dbReference type="PANTHER" id="PTHR43661:SF3">
    <property type="entry name" value="D-XYLONATE DEHYDRATASE YAGF-RELATED"/>
    <property type="match status" value="1"/>
</dbReference>
<dbReference type="Pfam" id="PF24877">
    <property type="entry name" value="ILV_EDD_C"/>
    <property type="match status" value="1"/>
</dbReference>
<dbReference type="Pfam" id="PF00920">
    <property type="entry name" value="ILVD_EDD_N"/>
    <property type="match status" value="1"/>
</dbReference>
<dbReference type="SUPFAM" id="SSF143975">
    <property type="entry name" value="IlvD/EDD N-terminal domain-like"/>
    <property type="match status" value="1"/>
</dbReference>
<dbReference type="SUPFAM" id="SSF52016">
    <property type="entry name" value="LeuD/IlvD-like"/>
    <property type="match status" value="1"/>
</dbReference>
<dbReference type="PROSITE" id="PS00886">
    <property type="entry name" value="ILVD_EDD_1"/>
    <property type="match status" value="1"/>
</dbReference>
<dbReference type="PROSITE" id="PS00887">
    <property type="entry name" value="ILVD_EDD_2"/>
    <property type="match status" value="1"/>
</dbReference>
<organism>
    <name type="scientific">Leuconostoc mesenteroides subsp. mesenteroides (strain ATCC 8293 / DSM 20343 / BCRC 11652 / CCM 1803 / JCM 6124 / NCDO 523 / NBRC 100496 / NCIMB 8023 / NCTC 12954 / NRRL B-1118 / 37Y)</name>
    <dbReference type="NCBI Taxonomy" id="203120"/>
    <lineage>
        <taxon>Bacteria</taxon>
        <taxon>Bacillati</taxon>
        <taxon>Bacillota</taxon>
        <taxon>Bacilli</taxon>
        <taxon>Lactobacillales</taxon>
        <taxon>Lactobacillaceae</taxon>
        <taxon>Leuconostoc</taxon>
    </lineage>
</organism>
<protein>
    <recommendedName>
        <fullName evidence="1">Dihydroxy-acid dehydratase</fullName>
        <shortName evidence="1">DAD</shortName>
        <ecNumber evidence="1">4.2.1.9</ecNumber>
    </recommendedName>
</protein>
<accession>Q03UL2</accession>
<sequence>MTDTFSFNVNSDDLQKRSDHIKMGIHQAPARSLLYATGQVSNPEDMKKPFIAICNSYVEIIPGHVHLRELADVAKQAIRDAGGIPFEFNTIGVDDGIAMGHLGMRYSLPSRELIADSAETVITAHWFDGVFFLPNCDKITPGMIMASLRCNVPSVFVSGGPMKAGLDPQGKATTLSSMFEAVGAFKSGLMTEEEFLEMEQNACPTCGSCAGMFTANSMNTLMEVMGIALPFNGTALAISDERRDLIRDGAKQLMRMVKENVKPRDLITKEALDDAMALDMAMGGSTNTVLHVLSIAHEAGIDYDQADINEIAKKVPYLSKIAPSSKWAMEDVHNAGGVPAIINELIRMGDVLHPDRMTVTGKTLRENVADHEIINDEIIRKFDVNPYSKQGGLSILYGNLAPKGSVIKAGGVDPSIKDFTGEAIVFNSEQEAVEAIDSGQIHAGHVLIIRYEGPKGGPGMPEMLGPTSAITGMGLGKEVALVTDGRFSGASRGISVGHVSPEAADDGPIALVENGDKITIDLVNRTMHLHVDDTELAERHEHLKPFVPKMRNGWMARYQALVTSANTGGVLKGADELFPS</sequence>
<gene>
    <name evidence="1" type="primary">ilvD</name>
    <name type="ordered locus">LEUM_2040</name>
</gene>
<reference key="1">
    <citation type="journal article" date="2006" name="Proc. Natl. Acad. Sci. U.S.A.">
        <title>Comparative genomics of the lactic acid bacteria.</title>
        <authorList>
            <person name="Makarova K.S."/>
            <person name="Slesarev A."/>
            <person name="Wolf Y.I."/>
            <person name="Sorokin A."/>
            <person name="Mirkin B."/>
            <person name="Koonin E.V."/>
            <person name="Pavlov A."/>
            <person name="Pavlova N."/>
            <person name="Karamychev V."/>
            <person name="Polouchine N."/>
            <person name="Shakhova V."/>
            <person name="Grigoriev I."/>
            <person name="Lou Y."/>
            <person name="Rohksar D."/>
            <person name="Lucas S."/>
            <person name="Huang K."/>
            <person name="Goodstein D.M."/>
            <person name="Hawkins T."/>
            <person name="Plengvidhya V."/>
            <person name="Welker D."/>
            <person name="Hughes J."/>
            <person name="Goh Y."/>
            <person name="Benson A."/>
            <person name="Baldwin K."/>
            <person name="Lee J.-H."/>
            <person name="Diaz-Muniz I."/>
            <person name="Dosti B."/>
            <person name="Smeianov V."/>
            <person name="Wechter W."/>
            <person name="Barabote R."/>
            <person name="Lorca G."/>
            <person name="Altermann E."/>
            <person name="Barrangou R."/>
            <person name="Ganesan B."/>
            <person name="Xie Y."/>
            <person name="Rawsthorne H."/>
            <person name="Tamir D."/>
            <person name="Parker C."/>
            <person name="Breidt F."/>
            <person name="Broadbent J.R."/>
            <person name="Hutkins R."/>
            <person name="O'Sullivan D."/>
            <person name="Steele J."/>
            <person name="Unlu G."/>
            <person name="Saier M.H. Jr."/>
            <person name="Klaenhammer T."/>
            <person name="Richardson P."/>
            <person name="Kozyavkin S."/>
            <person name="Weimer B.C."/>
            <person name="Mills D.A."/>
        </authorList>
    </citation>
    <scope>NUCLEOTIDE SEQUENCE [LARGE SCALE GENOMIC DNA]</scope>
    <source>
        <strain>ATCC 8293 / DSM 20343 / BCRC 11652 / CCM 1803 / JCM 6124 / NCDO 523 / NBRC 100496 / NCIMB 8023 / NCTC 12954 / NRRL B-1118 / 37Y</strain>
    </source>
</reference>
<comment type="function">
    <text evidence="1">Functions in the biosynthesis of branched-chain amino acids. Catalyzes the dehydration of (2R,3R)-2,3-dihydroxy-3-methylpentanoate (2,3-dihydroxy-3-methylvalerate) into 2-oxo-3-methylpentanoate (2-oxo-3-methylvalerate) and of (2R)-2,3-dihydroxy-3-methylbutanoate (2,3-dihydroxyisovalerate) into 2-oxo-3-methylbutanoate (2-oxoisovalerate), the penultimate precursor to L-isoleucine and L-valine, respectively.</text>
</comment>
<comment type="catalytic activity">
    <reaction evidence="1">
        <text>(2R)-2,3-dihydroxy-3-methylbutanoate = 3-methyl-2-oxobutanoate + H2O</text>
        <dbReference type="Rhea" id="RHEA:24809"/>
        <dbReference type="ChEBI" id="CHEBI:11851"/>
        <dbReference type="ChEBI" id="CHEBI:15377"/>
        <dbReference type="ChEBI" id="CHEBI:49072"/>
        <dbReference type="EC" id="4.2.1.9"/>
    </reaction>
    <physiologicalReaction direction="left-to-right" evidence="1">
        <dbReference type="Rhea" id="RHEA:24810"/>
    </physiologicalReaction>
</comment>
<comment type="catalytic activity">
    <reaction evidence="1">
        <text>(2R,3R)-2,3-dihydroxy-3-methylpentanoate = (S)-3-methyl-2-oxopentanoate + H2O</text>
        <dbReference type="Rhea" id="RHEA:27694"/>
        <dbReference type="ChEBI" id="CHEBI:15377"/>
        <dbReference type="ChEBI" id="CHEBI:35146"/>
        <dbReference type="ChEBI" id="CHEBI:49258"/>
        <dbReference type="EC" id="4.2.1.9"/>
    </reaction>
    <physiologicalReaction direction="left-to-right" evidence="1">
        <dbReference type="Rhea" id="RHEA:27695"/>
    </physiologicalReaction>
</comment>
<comment type="cofactor">
    <cofactor evidence="1">
        <name>[2Fe-2S] cluster</name>
        <dbReference type="ChEBI" id="CHEBI:190135"/>
    </cofactor>
    <text evidence="1">Binds 1 [2Fe-2S] cluster per subunit. This cluster acts as a Lewis acid cofactor.</text>
</comment>
<comment type="cofactor">
    <cofactor evidence="1">
        <name>Mg(2+)</name>
        <dbReference type="ChEBI" id="CHEBI:18420"/>
    </cofactor>
</comment>
<comment type="pathway">
    <text evidence="1">Amino-acid biosynthesis; L-isoleucine biosynthesis; L-isoleucine from 2-oxobutanoate: step 3/4.</text>
</comment>
<comment type="pathway">
    <text evidence="1">Amino-acid biosynthesis; L-valine biosynthesis; L-valine from pyruvate: step 3/4.</text>
</comment>
<comment type="subunit">
    <text evidence="1">Homodimer.</text>
</comment>
<comment type="similarity">
    <text evidence="1">Belongs to the IlvD/Edd family.</text>
</comment>
<feature type="chain" id="PRO_0000321597" description="Dihydroxy-acid dehydratase">
    <location>
        <begin position="1"/>
        <end position="580"/>
    </location>
</feature>
<feature type="active site" description="Proton acceptor" evidence="1">
    <location>
        <position position="488"/>
    </location>
</feature>
<feature type="binding site" evidence="1">
    <location>
        <position position="95"/>
    </location>
    <ligand>
        <name>Mg(2+)</name>
        <dbReference type="ChEBI" id="CHEBI:18420"/>
    </ligand>
</feature>
<feature type="binding site" evidence="1">
    <location>
        <position position="136"/>
    </location>
    <ligand>
        <name>[2Fe-2S] cluster</name>
        <dbReference type="ChEBI" id="CHEBI:190135"/>
    </ligand>
</feature>
<feature type="binding site" evidence="1">
    <location>
        <position position="137"/>
    </location>
    <ligand>
        <name>Mg(2+)</name>
        <dbReference type="ChEBI" id="CHEBI:18420"/>
    </ligand>
</feature>
<feature type="binding site" description="via carbamate group" evidence="1">
    <location>
        <position position="138"/>
    </location>
    <ligand>
        <name>Mg(2+)</name>
        <dbReference type="ChEBI" id="CHEBI:18420"/>
    </ligand>
</feature>
<feature type="binding site" evidence="1">
    <location>
        <position position="209"/>
    </location>
    <ligand>
        <name>[2Fe-2S] cluster</name>
        <dbReference type="ChEBI" id="CHEBI:190135"/>
    </ligand>
</feature>
<feature type="binding site" evidence="1">
    <location>
        <position position="462"/>
    </location>
    <ligand>
        <name>Mg(2+)</name>
        <dbReference type="ChEBI" id="CHEBI:18420"/>
    </ligand>
</feature>
<feature type="modified residue" description="N6-carboxylysine" evidence="1">
    <location>
        <position position="138"/>
    </location>
</feature>
<keyword id="KW-0001">2Fe-2S</keyword>
<keyword id="KW-0028">Amino-acid biosynthesis</keyword>
<keyword id="KW-0100">Branched-chain amino acid biosynthesis</keyword>
<keyword id="KW-0408">Iron</keyword>
<keyword id="KW-0411">Iron-sulfur</keyword>
<keyword id="KW-0456">Lyase</keyword>
<keyword id="KW-0460">Magnesium</keyword>
<keyword id="KW-0479">Metal-binding</keyword>
<keyword id="KW-1185">Reference proteome</keyword>
<evidence type="ECO:0000255" key="1">
    <source>
        <dbReference type="HAMAP-Rule" id="MF_00012"/>
    </source>
</evidence>
<proteinExistence type="inferred from homology"/>
<name>ILVD_LEUMM</name>